<accession>Q7WFS0</accession>
<dbReference type="EC" id="6.3.2.9" evidence="1"/>
<dbReference type="EMBL" id="BX640449">
    <property type="protein sequence ID" value="CAE34564.1"/>
    <property type="molecule type" value="Genomic_DNA"/>
</dbReference>
<dbReference type="RefSeq" id="WP_003814575.1">
    <property type="nucleotide sequence ID" value="NC_002927.3"/>
</dbReference>
<dbReference type="SMR" id="Q7WFS0"/>
<dbReference type="GeneID" id="56477309"/>
<dbReference type="KEGG" id="bbr:BB4200"/>
<dbReference type="eggNOG" id="COG0771">
    <property type="taxonomic scope" value="Bacteria"/>
</dbReference>
<dbReference type="HOGENOM" id="CLU_032540_1_1_4"/>
<dbReference type="UniPathway" id="UPA00219"/>
<dbReference type="Proteomes" id="UP000001027">
    <property type="component" value="Chromosome"/>
</dbReference>
<dbReference type="GO" id="GO:0005737">
    <property type="term" value="C:cytoplasm"/>
    <property type="evidence" value="ECO:0007669"/>
    <property type="project" value="UniProtKB-SubCell"/>
</dbReference>
<dbReference type="GO" id="GO:0005524">
    <property type="term" value="F:ATP binding"/>
    <property type="evidence" value="ECO:0007669"/>
    <property type="project" value="UniProtKB-UniRule"/>
</dbReference>
<dbReference type="GO" id="GO:0004326">
    <property type="term" value="F:tetrahydrofolylpolyglutamate synthase activity"/>
    <property type="evidence" value="ECO:0007669"/>
    <property type="project" value="InterPro"/>
</dbReference>
<dbReference type="GO" id="GO:0008764">
    <property type="term" value="F:UDP-N-acetylmuramoylalanine-D-glutamate ligase activity"/>
    <property type="evidence" value="ECO:0007669"/>
    <property type="project" value="UniProtKB-UniRule"/>
</dbReference>
<dbReference type="GO" id="GO:0051301">
    <property type="term" value="P:cell division"/>
    <property type="evidence" value="ECO:0007669"/>
    <property type="project" value="UniProtKB-KW"/>
</dbReference>
<dbReference type="GO" id="GO:0071555">
    <property type="term" value="P:cell wall organization"/>
    <property type="evidence" value="ECO:0007669"/>
    <property type="project" value="UniProtKB-KW"/>
</dbReference>
<dbReference type="GO" id="GO:0009252">
    <property type="term" value="P:peptidoglycan biosynthetic process"/>
    <property type="evidence" value="ECO:0007669"/>
    <property type="project" value="UniProtKB-UniRule"/>
</dbReference>
<dbReference type="GO" id="GO:0008360">
    <property type="term" value="P:regulation of cell shape"/>
    <property type="evidence" value="ECO:0007669"/>
    <property type="project" value="UniProtKB-KW"/>
</dbReference>
<dbReference type="Gene3D" id="3.90.190.20">
    <property type="entry name" value="Mur ligase, C-terminal domain"/>
    <property type="match status" value="1"/>
</dbReference>
<dbReference type="Gene3D" id="3.40.1190.10">
    <property type="entry name" value="Mur-like, catalytic domain"/>
    <property type="match status" value="1"/>
</dbReference>
<dbReference type="Gene3D" id="3.40.50.720">
    <property type="entry name" value="NAD(P)-binding Rossmann-like Domain"/>
    <property type="match status" value="1"/>
</dbReference>
<dbReference type="HAMAP" id="MF_00639">
    <property type="entry name" value="MurD"/>
    <property type="match status" value="1"/>
</dbReference>
<dbReference type="InterPro" id="IPR018109">
    <property type="entry name" value="Folylpolyglutamate_synth_CS"/>
</dbReference>
<dbReference type="InterPro" id="IPR036565">
    <property type="entry name" value="Mur-like_cat_sf"/>
</dbReference>
<dbReference type="InterPro" id="IPR004101">
    <property type="entry name" value="Mur_ligase_C"/>
</dbReference>
<dbReference type="InterPro" id="IPR036615">
    <property type="entry name" value="Mur_ligase_C_dom_sf"/>
</dbReference>
<dbReference type="InterPro" id="IPR013221">
    <property type="entry name" value="Mur_ligase_cen"/>
</dbReference>
<dbReference type="InterPro" id="IPR005762">
    <property type="entry name" value="MurD"/>
</dbReference>
<dbReference type="NCBIfam" id="TIGR01087">
    <property type="entry name" value="murD"/>
    <property type="match status" value="1"/>
</dbReference>
<dbReference type="PANTHER" id="PTHR43692">
    <property type="entry name" value="UDP-N-ACETYLMURAMOYLALANINE--D-GLUTAMATE LIGASE"/>
    <property type="match status" value="1"/>
</dbReference>
<dbReference type="PANTHER" id="PTHR43692:SF1">
    <property type="entry name" value="UDP-N-ACETYLMURAMOYLALANINE--D-GLUTAMATE LIGASE"/>
    <property type="match status" value="1"/>
</dbReference>
<dbReference type="Pfam" id="PF02875">
    <property type="entry name" value="Mur_ligase_C"/>
    <property type="match status" value="1"/>
</dbReference>
<dbReference type="Pfam" id="PF08245">
    <property type="entry name" value="Mur_ligase_M"/>
    <property type="match status" value="1"/>
</dbReference>
<dbReference type="Pfam" id="PF21799">
    <property type="entry name" value="MurD-like_N"/>
    <property type="match status" value="1"/>
</dbReference>
<dbReference type="SUPFAM" id="SSF51984">
    <property type="entry name" value="MurCD N-terminal domain"/>
    <property type="match status" value="1"/>
</dbReference>
<dbReference type="SUPFAM" id="SSF53623">
    <property type="entry name" value="MurD-like peptide ligases, catalytic domain"/>
    <property type="match status" value="1"/>
</dbReference>
<dbReference type="SUPFAM" id="SSF53244">
    <property type="entry name" value="MurD-like peptide ligases, peptide-binding domain"/>
    <property type="match status" value="1"/>
</dbReference>
<protein>
    <recommendedName>
        <fullName evidence="1">UDP-N-acetylmuramoylalanine--D-glutamate ligase</fullName>
        <ecNumber evidence="1">6.3.2.9</ecNumber>
    </recommendedName>
    <alternativeName>
        <fullName evidence="1">D-glutamic acid-adding enzyme</fullName>
    </alternativeName>
    <alternativeName>
        <fullName evidence="1">UDP-N-acetylmuramoyl-L-alanyl-D-glutamate synthetase</fullName>
    </alternativeName>
</protein>
<organism>
    <name type="scientific">Bordetella bronchiseptica (strain ATCC BAA-588 / NCTC 13252 / RB50)</name>
    <name type="common">Alcaligenes bronchisepticus</name>
    <dbReference type="NCBI Taxonomy" id="257310"/>
    <lineage>
        <taxon>Bacteria</taxon>
        <taxon>Pseudomonadati</taxon>
        <taxon>Pseudomonadota</taxon>
        <taxon>Betaproteobacteria</taxon>
        <taxon>Burkholderiales</taxon>
        <taxon>Alcaligenaceae</taxon>
        <taxon>Bordetella</taxon>
    </lineage>
</organism>
<sequence length="510" mass="54006">MNTTETSRAAAPLVLILGLGETGVAAARWCARQGSPLRVADTRAQPGGLAALQAALADATVEYRLGCGEQFPPDLLDGVAQIVLSPGLVPHESPTRELLEQARERNVEVVGEIELFARALAGLAESREYRPRVLAITGTNGKTTVTALTRQLIEAGGMSARAAGNISPAALAALIDALDQDDLPQVWVLELSSFQLETTRTLAPDAAVVLNVTQDHLDWHGDMQAYAQAKARILKPARLAIVNRDDPLTVAMVESLQALNVRSFGRDVPALVGDMGLELGQGVAWLTACESNDFDEPAPAPRRKKDAPPPTRAGGRMSRLMPVDALRIRGVHNALNALAAMQLARSLDLGWGPMLRTLRDYAGEPHRAELVRSIGDVDYINDSKGTNVGATVAALEGLGQQVVLIAGGQGKGQDFSPLVPVVRRHARAVVLIGVDGAAIGKVLEPTGVPCVAAADMREAVRRAAELAQPGDAVLLSPACASFDMFRNYPHRGEVFAAEVQELALDRGEVA</sequence>
<name>MURD_BORBR</name>
<keyword id="KW-0067">ATP-binding</keyword>
<keyword id="KW-0131">Cell cycle</keyword>
<keyword id="KW-0132">Cell division</keyword>
<keyword id="KW-0133">Cell shape</keyword>
<keyword id="KW-0961">Cell wall biogenesis/degradation</keyword>
<keyword id="KW-0963">Cytoplasm</keyword>
<keyword id="KW-0436">Ligase</keyword>
<keyword id="KW-0547">Nucleotide-binding</keyword>
<keyword id="KW-0573">Peptidoglycan synthesis</keyword>
<evidence type="ECO:0000255" key="1">
    <source>
        <dbReference type="HAMAP-Rule" id="MF_00639"/>
    </source>
</evidence>
<evidence type="ECO:0000256" key="2">
    <source>
        <dbReference type="SAM" id="MobiDB-lite"/>
    </source>
</evidence>
<gene>
    <name evidence="1" type="primary">murD</name>
    <name type="ordered locus">BB4200</name>
</gene>
<proteinExistence type="inferred from homology"/>
<reference key="1">
    <citation type="journal article" date="2003" name="Nat. Genet.">
        <title>Comparative analysis of the genome sequences of Bordetella pertussis, Bordetella parapertussis and Bordetella bronchiseptica.</title>
        <authorList>
            <person name="Parkhill J."/>
            <person name="Sebaihia M."/>
            <person name="Preston A."/>
            <person name="Murphy L.D."/>
            <person name="Thomson N.R."/>
            <person name="Harris D.E."/>
            <person name="Holden M.T.G."/>
            <person name="Churcher C.M."/>
            <person name="Bentley S.D."/>
            <person name="Mungall K.L."/>
            <person name="Cerdeno-Tarraga A.-M."/>
            <person name="Temple L."/>
            <person name="James K.D."/>
            <person name="Harris B."/>
            <person name="Quail M.A."/>
            <person name="Achtman M."/>
            <person name="Atkin R."/>
            <person name="Baker S."/>
            <person name="Basham D."/>
            <person name="Bason N."/>
            <person name="Cherevach I."/>
            <person name="Chillingworth T."/>
            <person name="Collins M."/>
            <person name="Cronin A."/>
            <person name="Davis P."/>
            <person name="Doggett J."/>
            <person name="Feltwell T."/>
            <person name="Goble A."/>
            <person name="Hamlin N."/>
            <person name="Hauser H."/>
            <person name="Holroyd S."/>
            <person name="Jagels K."/>
            <person name="Leather S."/>
            <person name="Moule S."/>
            <person name="Norberczak H."/>
            <person name="O'Neil S."/>
            <person name="Ormond D."/>
            <person name="Price C."/>
            <person name="Rabbinowitsch E."/>
            <person name="Rutter S."/>
            <person name="Sanders M."/>
            <person name="Saunders D."/>
            <person name="Seeger K."/>
            <person name="Sharp S."/>
            <person name="Simmonds M."/>
            <person name="Skelton J."/>
            <person name="Squares R."/>
            <person name="Squares S."/>
            <person name="Stevens K."/>
            <person name="Unwin L."/>
            <person name="Whitehead S."/>
            <person name="Barrell B.G."/>
            <person name="Maskell D.J."/>
        </authorList>
    </citation>
    <scope>NUCLEOTIDE SEQUENCE [LARGE SCALE GENOMIC DNA]</scope>
    <source>
        <strain>ATCC BAA-588 / NCTC 13252 / RB50</strain>
    </source>
</reference>
<feature type="chain" id="PRO_0000108976" description="UDP-N-acetylmuramoylalanine--D-glutamate ligase">
    <location>
        <begin position="1"/>
        <end position="510"/>
    </location>
</feature>
<feature type="region of interest" description="Disordered" evidence="2">
    <location>
        <begin position="294"/>
        <end position="316"/>
    </location>
</feature>
<feature type="binding site" evidence="1">
    <location>
        <begin position="138"/>
        <end position="144"/>
    </location>
    <ligand>
        <name>ATP</name>
        <dbReference type="ChEBI" id="CHEBI:30616"/>
    </ligand>
</feature>
<comment type="function">
    <text evidence="1">Cell wall formation. Catalyzes the addition of glutamate to the nucleotide precursor UDP-N-acetylmuramoyl-L-alanine (UMA).</text>
</comment>
<comment type="catalytic activity">
    <reaction evidence="1">
        <text>UDP-N-acetyl-alpha-D-muramoyl-L-alanine + D-glutamate + ATP = UDP-N-acetyl-alpha-D-muramoyl-L-alanyl-D-glutamate + ADP + phosphate + H(+)</text>
        <dbReference type="Rhea" id="RHEA:16429"/>
        <dbReference type="ChEBI" id="CHEBI:15378"/>
        <dbReference type="ChEBI" id="CHEBI:29986"/>
        <dbReference type="ChEBI" id="CHEBI:30616"/>
        <dbReference type="ChEBI" id="CHEBI:43474"/>
        <dbReference type="ChEBI" id="CHEBI:83898"/>
        <dbReference type="ChEBI" id="CHEBI:83900"/>
        <dbReference type="ChEBI" id="CHEBI:456216"/>
        <dbReference type="EC" id="6.3.2.9"/>
    </reaction>
</comment>
<comment type="pathway">
    <text evidence="1">Cell wall biogenesis; peptidoglycan biosynthesis.</text>
</comment>
<comment type="subcellular location">
    <subcellularLocation>
        <location evidence="1">Cytoplasm</location>
    </subcellularLocation>
</comment>
<comment type="similarity">
    <text evidence="1">Belongs to the MurCDEF family.</text>
</comment>